<dbReference type="EMBL" id="CP000878">
    <property type="protein sequence ID" value="ABX09330.1"/>
    <property type="molecule type" value="Genomic_DNA"/>
</dbReference>
<dbReference type="RefSeq" id="WP_012195951.1">
    <property type="nucleotide sequence ID" value="NC_009976.1"/>
</dbReference>
<dbReference type="SMR" id="A9BBW8"/>
<dbReference type="STRING" id="93059.P9211_13991"/>
<dbReference type="KEGG" id="pmj:P9211_13991"/>
<dbReference type="eggNOG" id="COG0211">
    <property type="taxonomic scope" value="Bacteria"/>
</dbReference>
<dbReference type="HOGENOM" id="CLU_095424_4_0_3"/>
<dbReference type="OrthoDB" id="9803474at2"/>
<dbReference type="Proteomes" id="UP000000788">
    <property type="component" value="Chromosome"/>
</dbReference>
<dbReference type="GO" id="GO:0022625">
    <property type="term" value="C:cytosolic large ribosomal subunit"/>
    <property type="evidence" value="ECO:0007669"/>
    <property type="project" value="TreeGrafter"/>
</dbReference>
<dbReference type="GO" id="GO:0003735">
    <property type="term" value="F:structural constituent of ribosome"/>
    <property type="evidence" value="ECO:0007669"/>
    <property type="project" value="InterPro"/>
</dbReference>
<dbReference type="GO" id="GO:0006412">
    <property type="term" value="P:translation"/>
    <property type="evidence" value="ECO:0007669"/>
    <property type="project" value="UniProtKB-UniRule"/>
</dbReference>
<dbReference type="FunFam" id="2.40.50.100:FF:000004">
    <property type="entry name" value="50S ribosomal protein L27"/>
    <property type="match status" value="1"/>
</dbReference>
<dbReference type="Gene3D" id="2.40.50.100">
    <property type="match status" value="1"/>
</dbReference>
<dbReference type="HAMAP" id="MF_00539">
    <property type="entry name" value="Ribosomal_bL27"/>
    <property type="match status" value="1"/>
</dbReference>
<dbReference type="InterPro" id="IPR001684">
    <property type="entry name" value="Ribosomal_bL27"/>
</dbReference>
<dbReference type="InterPro" id="IPR018261">
    <property type="entry name" value="Ribosomal_bL27_CS"/>
</dbReference>
<dbReference type="NCBIfam" id="TIGR00062">
    <property type="entry name" value="L27"/>
    <property type="match status" value="1"/>
</dbReference>
<dbReference type="PANTHER" id="PTHR15893:SF0">
    <property type="entry name" value="LARGE RIBOSOMAL SUBUNIT PROTEIN BL27M"/>
    <property type="match status" value="1"/>
</dbReference>
<dbReference type="PANTHER" id="PTHR15893">
    <property type="entry name" value="RIBOSOMAL PROTEIN L27"/>
    <property type="match status" value="1"/>
</dbReference>
<dbReference type="Pfam" id="PF01016">
    <property type="entry name" value="Ribosomal_L27"/>
    <property type="match status" value="1"/>
</dbReference>
<dbReference type="PRINTS" id="PR00063">
    <property type="entry name" value="RIBOSOMALL27"/>
</dbReference>
<dbReference type="SUPFAM" id="SSF110324">
    <property type="entry name" value="Ribosomal L27 protein-like"/>
    <property type="match status" value="1"/>
</dbReference>
<dbReference type="PROSITE" id="PS00831">
    <property type="entry name" value="RIBOSOMAL_L27"/>
    <property type="match status" value="1"/>
</dbReference>
<protein>
    <recommendedName>
        <fullName evidence="1">Large ribosomal subunit protein bL27</fullName>
    </recommendedName>
    <alternativeName>
        <fullName evidence="3">50S ribosomal protein L27</fullName>
    </alternativeName>
</protein>
<organism>
    <name type="scientific">Prochlorococcus marinus (strain MIT 9211)</name>
    <dbReference type="NCBI Taxonomy" id="93059"/>
    <lineage>
        <taxon>Bacteria</taxon>
        <taxon>Bacillati</taxon>
        <taxon>Cyanobacteriota</taxon>
        <taxon>Cyanophyceae</taxon>
        <taxon>Synechococcales</taxon>
        <taxon>Prochlorococcaceae</taxon>
        <taxon>Prochlorococcus</taxon>
    </lineage>
</organism>
<keyword id="KW-1185">Reference proteome</keyword>
<keyword id="KW-0687">Ribonucleoprotein</keyword>
<keyword id="KW-0689">Ribosomal protein</keyword>
<gene>
    <name evidence="1" type="primary">rpmA</name>
    <name evidence="1" type="synonym">rpl27</name>
    <name type="ordered locus">P9211_13991</name>
</gene>
<feature type="chain" id="PRO_1000128791" description="Large ribosomal subunit protein bL27">
    <location>
        <begin position="1"/>
        <end position="88"/>
    </location>
</feature>
<feature type="region of interest" description="Disordered" evidence="2">
    <location>
        <begin position="1"/>
        <end position="26"/>
    </location>
</feature>
<evidence type="ECO:0000255" key="1">
    <source>
        <dbReference type="HAMAP-Rule" id="MF_00539"/>
    </source>
</evidence>
<evidence type="ECO:0000256" key="2">
    <source>
        <dbReference type="SAM" id="MobiDB-lite"/>
    </source>
</evidence>
<evidence type="ECO:0000305" key="3"/>
<comment type="similarity">
    <text evidence="1">Belongs to the bacterial ribosomal protein bL27 family.</text>
</comment>
<accession>A9BBW8</accession>
<sequence length="88" mass="9355">MAHKKGTGSTRNGRDSNSKRLGVKAYGGEPVTAGSILIRQRGTSVLPGINVGKGKDDTLFALTDGIVTFETIRRGLKNRKRISVALTS</sequence>
<proteinExistence type="inferred from homology"/>
<name>RL27_PROM4</name>
<reference key="1">
    <citation type="journal article" date="2007" name="PLoS Genet.">
        <title>Patterns and implications of gene gain and loss in the evolution of Prochlorococcus.</title>
        <authorList>
            <person name="Kettler G.C."/>
            <person name="Martiny A.C."/>
            <person name="Huang K."/>
            <person name="Zucker J."/>
            <person name="Coleman M.L."/>
            <person name="Rodrigue S."/>
            <person name="Chen F."/>
            <person name="Lapidus A."/>
            <person name="Ferriera S."/>
            <person name="Johnson J."/>
            <person name="Steglich C."/>
            <person name="Church G.M."/>
            <person name="Richardson P."/>
            <person name="Chisholm S.W."/>
        </authorList>
    </citation>
    <scope>NUCLEOTIDE SEQUENCE [LARGE SCALE GENOMIC DNA]</scope>
    <source>
        <strain>MIT 9211</strain>
    </source>
</reference>